<dbReference type="EMBL" id="AY884001">
    <property type="protein sequence ID" value="AAX76522.1"/>
    <property type="molecule type" value="Genomic_RNA"/>
</dbReference>
<dbReference type="Proteomes" id="UP000006551">
    <property type="component" value="Genome"/>
</dbReference>
<dbReference type="InterPro" id="IPR006841">
    <property type="entry name" value="Corona_NS2"/>
</dbReference>
<dbReference type="Pfam" id="PF04753">
    <property type="entry name" value="Corona_NS12-7"/>
    <property type="match status" value="1"/>
</dbReference>
<reference key="1">
    <citation type="journal article" date="2006" name="J. Virol.">
        <title>Comparative analysis of 22 coronavirus HKU1 genomes reveals a novel genotype and evidence of natural recombination in coronavirus HKU1.</title>
        <authorList>
            <person name="Woo P.C.Y."/>
            <person name="Lau S.K.P."/>
            <person name="Yip C.C.Y."/>
            <person name="Huang Y."/>
            <person name="Tsoi H.-W."/>
            <person name="Chan K.-H."/>
            <person name="Yuen K.-Y."/>
        </authorList>
    </citation>
    <scope>NUCLEOTIDE SEQUENCE [GENOMIC RNA]</scope>
</reference>
<evidence type="ECO:0000305" key="1"/>
<comment type="miscellaneous">
    <text>Isolate N2 belongs to genotype B.</text>
</comment>
<comment type="similarity">
    <text evidence="1">Belongs to the coronaviruses ns12.7 protein family.</text>
</comment>
<sequence>MEVWRPSYKYSLITREFGVTDLEDLCFKYNYCQPCVGYCIVPLNVWCRKFGKFASYFVLRSHDTSHKNNFGVITSFTSYGNTVSEAVSKLVESASDFIAWRAEALNKYG</sequence>
<organism>
    <name type="scientific">Human coronavirus HKU1 (isolate N2)</name>
    <name type="common">HCoV-HKU1</name>
    <dbReference type="NCBI Taxonomy" id="443240"/>
    <lineage>
        <taxon>Viruses</taxon>
        <taxon>Riboviria</taxon>
        <taxon>Orthornavirae</taxon>
        <taxon>Pisuviricota</taxon>
        <taxon>Pisoniviricetes</taxon>
        <taxon>Nidovirales</taxon>
        <taxon>Cornidovirineae</taxon>
        <taxon>Coronaviridae</taxon>
        <taxon>Orthocoronavirinae</taxon>
        <taxon>Betacoronavirus</taxon>
        <taxon>Embecovirus</taxon>
        <taxon>Human coronavirus HKU1</taxon>
    </lineage>
</organism>
<organismHost>
    <name type="scientific">Homo sapiens</name>
    <name type="common">Human</name>
    <dbReference type="NCBI Taxonomy" id="9606"/>
</organismHost>
<accession>Q14EA9</accession>
<name>NS12_CVHN2</name>
<proteinExistence type="inferred from homology"/>
<gene>
    <name type="ORF">4</name>
</gene>
<feature type="chain" id="PRO_0000297771" description="Non-structural protein 4">
    <location>
        <begin position="1"/>
        <end position="109"/>
    </location>
</feature>
<protein>
    <recommendedName>
        <fullName>Non-structural protein 4</fullName>
        <shortName>ns4</shortName>
    </recommendedName>
    <alternativeName>
        <fullName>Accessory protein 4</fullName>
    </alternativeName>
    <alternativeName>
        <fullName>Non-structural protein of 12.5 kDa</fullName>
        <shortName>ns12.5</shortName>
    </alternativeName>
    <alternativeName>
        <fullName>Orf4 protein</fullName>
    </alternativeName>
</protein>